<accession>Q6GKD8</accession>
<keyword id="KW-0520">NAD</keyword>
<keyword id="KW-0560">Oxidoreductase</keyword>
<feature type="chain" id="PRO_0000056458" description="Putative aldehyde dehydrogenase AldA">
    <location>
        <begin position="1"/>
        <end position="495"/>
    </location>
</feature>
<feature type="active site" evidence="1">
    <location>
        <position position="256"/>
    </location>
</feature>
<feature type="active site" evidence="1">
    <location>
        <position position="290"/>
    </location>
</feature>
<feature type="binding site" evidence="1">
    <location>
        <begin position="212"/>
        <end position="218"/>
    </location>
    <ligand>
        <name>NAD(+)</name>
        <dbReference type="ChEBI" id="CHEBI:57540"/>
    </ligand>
</feature>
<comment type="catalytic activity">
    <reaction>
        <text>an aldehyde + NAD(+) + H2O = a carboxylate + NADH + 2 H(+)</text>
        <dbReference type="Rhea" id="RHEA:16185"/>
        <dbReference type="ChEBI" id="CHEBI:15377"/>
        <dbReference type="ChEBI" id="CHEBI:15378"/>
        <dbReference type="ChEBI" id="CHEBI:17478"/>
        <dbReference type="ChEBI" id="CHEBI:29067"/>
        <dbReference type="ChEBI" id="CHEBI:57540"/>
        <dbReference type="ChEBI" id="CHEBI:57945"/>
        <dbReference type="EC" id="1.2.1.3"/>
    </reaction>
</comment>
<comment type="similarity">
    <text evidence="2">Belongs to the aldehyde dehydrogenase family.</text>
</comment>
<proteinExistence type="inferred from homology"/>
<reference key="1">
    <citation type="journal article" date="2004" name="Proc. Natl. Acad. Sci. U.S.A.">
        <title>Complete genomes of two clinical Staphylococcus aureus strains: evidence for the rapid evolution of virulence and drug resistance.</title>
        <authorList>
            <person name="Holden M.T.G."/>
            <person name="Feil E.J."/>
            <person name="Lindsay J.A."/>
            <person name="Peacock S.J."/>
            <person name="Day N.P.J."/>
            <person name="Enright M.C."/>
            <person name="Foster T.J."/>
            <person name="Moore C.E."/>
            <person name="Hurst L."/>
            <person name="Atkin R."/>
            <person name="Barron A."/>
            <person name="Bason N."/>
            <person name="Bentley S.D."/>
            <person name="Chillingworth C."/>
            <person name="Chillingworth T."/>
            <person name="Churcher C."/>
            <person name="Clark L."/>
            <person name="Corton C."/>
            <person name="Cronin A."/>
            <person name="Doggett J."/>
            <person name="Dowd L."/>
            <person name="Feltwell T."/>
            <person name="Hance Z."/>
            <person name="Harris B."/>
            <person name="Hauser H."/>
            <person name="Holroyd S."/>
            <person name="Jagels K."/>
            <person name="James K.D."/>
            <person name="Lennard N."/>
            <person name="Line A."/>
            <person name="Mayes R."/>
            <person name="Moule S."/>
            <person name="Mungall K."/>
            <person name="Ormond D."/>
            <person name="Quail M.A."/>
            <person name="Rabbinowitsch E."/>
            <person name="Rutherford K.M."/>
            <person name="Sanders M."/>
            <person name="Sharp S."/>
            <person name="Simmonds M."/>
            <person name="Stevens K."/>
            <person name="Whitehead S."/>
            <person name="Barrell B.G."/>
            <person name="Spratt B.G."/>
            <person name="Parkhill J."/>
        </authorList>
    </citation>
    <scope>NUCLEOTIDE SEQUENCE [LARGE SCALE GENOMIC DNA]</scope>
    <source>
        <strain>MRSA252</strain>
    </source>
</reference>
<protein>
    <recommendedName>
        <fullName>Putative aldehyde dehydrogenase AldA</fullName>
        <ecNumber>1.2.1.3</ecNumber>
    </recommendedName>
</protein>
<dbReference type="EC" id="1.2.1.3"/>
<dbReference type="EMBL" id="BX571856">
    <property type="protein sequence ID" value="CAG39196.1"/>
    <property type="molecule type" value="Genomic_DNA"/>
</dbReference>
<dbReference type="RefSeq" id="WP_000290401.1">
    <property type="nucleotide sequence ID" value="NC_002952.2"/>
</dbReference>
<dbReference type="SMR" id="Q6GKD8"/>
<dbReference type="KEGG" id="sar:SAR0169"/>
<dbReference type="HOGENOM" id="CLU_005391_0_2_9"/>
<dbReference type="Proteomes" id="UP000000596">
    <property type="component" value="Chromosome"/>
</dbReference>
<dbReference type="GO" id="GO:0004029">
    <property type="term" value="F:aldehyde dehydrogenase (NAD+) activity"/>
    <property type="evidence" value="ECO:0007669"/>
    <property type="project" value="UniProtKB-EC"/>
</dbReference>
<dbReference type="CDD" id="cd07117">
    <property type="entry name" value="ALDH_StaphAldA1"/>
    <property type="match status" value="1"/>
</dbReference>
<dbReference type="FunFam" id="3.40.309.10:FF:000012">
    <property type="entry name" value="Betaine aldehyde dehydrogenase"/>
    <property type="match status" value="1"/>
</dbReference>
<dbReference type="FunFam" id="3.40.605.10:FF:000007">
    <property type="entry name" value="NAD/NADP-dependent betaine aldehyde dehydrogenase"/>
    <property type="match status" value="1"/>
</dbReference>
<dbReference type="Gene3D" id="3.40.605.10">
    <property type="entry name" value="Aldehyde Dehydrogenase, Chain A, domain 1"/>
    <property type="match status" value="1"/>
</dbReference>
<dbReference type="Gene3D" id="3.40.309.10">
    <property type="entry name" value="Aldehyde Dehydrogenase, Chain A, domain 2"/>
    <property type="match status" value="1"/>
</dbReference>
<dbReference type="InterPro" id="IPR016161">
    <property type="entry name" value="Ald_DH/histidinol_DH"/>
</dbReference>
<dbReference type="InterPro" id="IPR016163">
    <property type="entry name" value="Ald_DH_C"/>
</dbReference>
<dbReference type="InterPro" id="IPR016160">
    <property type="entry name" value="Ald_DH_CS_CYS"/>
</dbReference>
<dbReference type="InterPro" id="IPR029510">
    <property type="entry name" value="Ald_DH_CS_GLU"/>
</dbReference>
<dbReference type="InterPro" id="IPR016162">
    <property type="entry name" value="Ald_DH_N"/>
</dbReference>
<dbReference type="InterPro" id="IPR015590">
    <property type="entry name" value="Aldehyde_DH_dom"/>
</dbReference>
<dbReference type="PANTHER" id="PTHR43111">
    <property type="entry name" value="ALDEHYDE DEHYDROGENASE B-RELATED"/>
    <property type="match status" value="1"/>
</dbReference>
<dbReference type="PANTHER" id="PTHR43111:SF1">
    <property type="entry name" value="ALDEHYDE DEHYDROGENASE B-RELATED"/>
    <property type="match status" value="1"/>
</dbReference>
<dbReference type="Pfam" id="PF00171">
    <property type="entry name" value="Aldedh"/>
    <property type="match status" value="1"/>
</dbReference>
<dbReference type="SUPFAM" id="SSF53720">
    <property type="entry name" value="ALDH-like"/>
    <property type="match status" value="1"/>
</dbReference>
<dbReference type="PROSITE" id="PS00070">
    <property type="entry name" value="ALDEHYDE_DEHYDR_CYS"/>
    <property type="match status" value="1"/>
</dbReference>
<dbReference type="PROSITE" id="PS00687">
    <property type="entry name" value="ALDEHYDE_DEHYDR_GLU"/>
    <property type="match status" value="1"/>
</dbReference>
<name>ALDA_STAAR</name>
<sequence>MAVNVRDYIAENYGLFINGEFVKGSSDETIEVTNPATGETLSHITRAKDKDVDHAVKVAQEAFESWSLTSKSERAQMLRDIGDKLMAQKDKIAMIETLNNGKPIRETTAIDIPFAARHFHYFASVIETEEGTVNDIDKDTMSIVRHEPIGVVGAVVAWNFPMLLAAWKIAPAIAAGNTIVIQPSSSTPLSLLEVAKIFQEVLPNGVVNILTGKGSESGNAIFNHDGVDKLSFTGSTDVGYQVAEAAAKHLVPATLELGGKSANIILDDANLDLAVEGIQLGILFNQGEVCSAGSRLLVHEKIYDQLVPRLQEAFSNIKVGDPQDEATQMGSQTGKDQLDKIQSYIDAAKESDAQILAGGHRLTENGLDKGFFFEPTLIAVPDNHHKLAQEEIFGPVLTVIKVKDDQEAIDIANDSEYGLAGGVFSQNITRALNIAKAVRTGRIWINTYNQVPEGAPFGGYKKSGIGRETYKGALSNYQQVKNIYIDTSNALKGLY</sequence>
<gene>
    <name type="primary">aldA</name>
    <name type="ordered locus">SAR0169</name>
</gene>
<organism>
    <name type="scientific">Staphylococcus aureus (strain MRSA252)</name>
    <dbReference type="NCBI Taxonomy" id="282458"/>
    <lineage>
        <taxon>Bacteria</taxon>
        <taxon>Bacillati</taxon>
        <taxon>Bacillota</taxon>
        <taxon>Bacilli</taxon>
        <taxon>Bacillales</taxon>
        <taxon>Staphylococcaceae</taxon>
        <taxon>Staphylococcus</taxon>
    </lineage>
</organism>
<evidence type="ECO:0000250" key="1"/>
<evidence type="ECO:0000305" key="2"/>